<dbReference type="EC" id="2.1.1.177" evidence="1"/>
<dbReference type="EMBL" id="CP000733">
    <property type="protein sequence ID" value="ABS76906.1"/>
    <property type="molecule type" value="Genomic_DNA"/>
</dbReference>
<dbReference type="RefSeq" id="WP_005771131.1">
    <property type="nucleotide sequence ID" value="NC_009727.1"/>
</dbReference>
<dbReference type="SMR" id="A9KCR0"/>
<dbReference type="KEGG" id="cbd:CBUD_1512"/>
<dbReference type="HOGENOM" id="CLU_100552_1_0_6"/>
<dbReference type="Proteomes" id="UP000008555">
    <property type="component" value="Chromosome"/>
</dbReference>
<dbReference type="GO" id="GO:0005737">
    <property type="term" value="C:cytoplasm"/>
    <property type="evidence" value="ECO:0007669"/>
    <property type="project" value="UniProtKB-SubCell"/>
</dbReference>
<dbReference type="GO" id="GO:0070038">
    <property type="term" value="F:rRNA (pseudouridine-N3-)-methyltransferase activity"/>
    <property type="evidence" value="ECO:0007669"/>
    <property type="project" value="UniProtKB-UniRule"/>
</dbReference>
<dbReference type="CDD" id="cd18081">
    <property type="entry name" value="RlmH-like"/>
    <property type="match status" value="1"/>
</dbReference>
<dbReference type="Gene3D" id="3.40.1280.10">
    <property type="match status" value="1"/>
</dbReference>
<dbReference type="HAMAP" id="MF_00658">
    <property type="entry name" value="23SrRNA_methyltr_H"/>
    <property type="match status" value="1"/>
</dbReference>
<dbReference type="InterPro" id="IPR029028">
    <property type="entry name" value="Alpha/beta_knot_MTases"/>
</dbReference>
<dbReference type="InterPro" id="IPR003742">
    <property type="entry name" value="RlmH-like"/>
</dbReference>
<dbReference type="InterPro" id="IPR029026">
    <property type="entry name" value="tRNA_m1G_MTases_N"/>
</dbReference>
<dbReference type="NCBIfam" id="NF000986">
    <property type="entry name" value="PRK00103.1-4"/>
    <property type="match status" value="1"/>
</dbReference>
<dbReference type="NCBIfam" id="TIGR00246">
    <property type="entry name" value="tRNA_RlmH_YbeA"/>
    <property type="match status" value="1"/>
</dbReference>
<dbReference type="PANTHER" id="PTHR33603">
    <property type="entry name" value="METHYLTRANSFERASE"/>
    <property type="match status" value="1"/>
</dbReference>
<dbReference type="PANTHER" id="PTHR33603:SF1">
    <property type="entry name" value="RIBOSOMAL RNA LARGE SUBUNIT METHYLTRANSFERASE H"/>
    <property type="match status" value="1"/>
</dbReference>
<dbReference type="Pfam" id="PF02590">
    <property type="entry name" value="SPOUT_MTase"/>
    <property type="match status" value="1"/>
</dbReference>
<dbReference type="PIRSF" id="PIRSF004505">
    <property type="entry name" value="MT_bac"/>
    <property type="match status" value="1"/>
</dbReference>
<dbReference type="SUPFAM" id="SSF75217">
    <property type="entry name" value="alpha/beta knot"/>
    <property type="match status" value="1"/>
</dbReference>
<name>RLMH_COXBN</name>
<evidence type="ECO:0000255" key="1">
    <source>
        <dbReference type="HAMAP-Rule" id="MF_00658"/>
    </source>
</evidence>
<protein>
    <recommendedName>
        <fullName evidence="1">Ribosomal RNA large subunit methyltransferase H</fullName>
        <ecNumber evidence="1">2.1.1.177</ecNumber>
    </recommendedName>
    <alternativeName>
        <fullName evidence="1">23S rRNA (pseudouridine1915-N3)-methyltransferase</fullName>
    </alternativeName>
    <alternativeName>
        <fullName evidence="1">23S rRNA m3Psi1915 methyltransferase</fullName>
    </alternativeName>
    <alternativeName>
        <fullName evidence="1">rRNA (pseudouridine-N3-)-methyltransferase RlmH</fullName>
    </alternativeName>
</protein>
<comment type="function">
    <text evidence="1">Specifically methylates the pseudouridine at position 1915 (m3Psi1915) in 23S rRNA.</text>
</comment>
<comment type="catalytic activity">
    <reaction evidence="1">
        <text>pseudouridine(1915) in 23S rRNA + S-adenosyl-L-methionine = N(3)-methylpseudouridine(1915) in 23S rRNA + S-adenosyl-L-homocysteine + H(+)</text>
        <dbReference type="Rhea" id="RHEA:42752"/>
        <dbReference type="Rhea" id="RHEA-COMP:10221"/>
        <dbReference type="Rhea" id="RHEA-COMP:10222"/>
        <dbReference type="ChEBI" id="CHEBI:15378"/>
        <dbReference type="ChEBI" id="CHEBI:57856"/>
        <dbReference type="ChEBI" id="CHEBI:59789"/>
        <dbReference type="ChEBI" id="CHEBI:65314"/>
        <dbReference type="ChEBI" id="CHEBI:74486"/>
        <dbReference type="EC" id="2.1.1.177"/>
    </reaction>
</comment>
<comment type="subunit">
    <text evidence="1">Homodimer.</text>
</comment>
<comment type="subcellular location">
    <subcellularLocation>
        <location evidence="1">Cytoplasm</location>
    </subcellularLocation>
</comment>
<comment type="similarity">
    <text evidence="1">Belongs to the RNA methyltransferase RlmH family.</text>
</comment>
<keyword id="KW-0963">Cytoplasm</keyword>
<keyword id="KW-0489">Methyltransferase</keyword>
<keyword id="KW-0698">rRNA processing</keyword>
<keyword id="KW-0949">S-adenosyl-L-methionine</keyword>
<keyword id="KW-0808">Transferase</keyword>
<sequence length="155" mass="17536">MKINVVAVGKRLPAWIKAGFQSYADRLPRDFDLNLIEIAAFKRSKGADLKKIMLQESQQLIDAVPKESEIIVLDRLGEEVDTPTLAQKLSQWRHENRSISLLIGGPEGLSATCIDKARWVWSLSALTLPHALARVIVAEQIYRAWSIITNHPYHR</sequence>
<proteinExistence type="inferred from homology"/>
<feature type="chain" id="PRO_1000082800" description="Ribosomal RNA large subunit methyltransferase H">
    <location>
        <begin position="1"/>
        <end position="155"/>
    </location>
</feature>
<feature type="binding site" evidence="1">
    <location>
        <position position="73"/>
    </location>
    <ligand>
        <name>S-adenosyl-L-methionine</name>
        <dbReference type="ChEBI" id="CHEBI:59789"/>
    </ligand>
</feature>
<feature type="binding site" evidence="1">
    <location>
        <position position="104"/>
    </location>
    <ligand>
        <name>S-adenosyl-L-methionine</name>
        <dbReference type="ChEBI" id="CHEBI:59789"/>
    </ligand>
</feature>
<feature type="binding site" evidence="1">
    <location>
        <begin position="123"/>
        <end position="128"/>
    </location>
    <ligand>
        <name>S-adenosyl-L-methionine</name>
        <dbReference type="ChEBI" id="CHEBI:59789"/>
    </ligand>
</feature>
<accession>A9KCR0</accession>
<gene>
    <name evidence="1" type="primary">rlmH</name>
    <name type="ordered locus">CBUD_1512</name>
</gene>
<organism>
    <name type="scientific">Coxiella burnetii (strain Dugway 5J108-111)</name>
    <dbReference type="NCBI Taxonomy" id="434922"/>
    <lineage>
        <taxon>Bacteria</taxon>
        <taxon>Pseudomonadati</taxon>
        <taxon>Pseudomonadota</taxon>
        <taxon>Gammaproteobacteria</taxon>
        <taxon>Legionellales</taxon>
        <taxon>Coxiellaceae</taxon>
        <taxon>Coxiella</taxon>
    </lineage>
</organism>
<reference key="1">
    <citation type="journal article" date="2009" name="Infect. Immun.">
        <title>Comparative genomics reveal extensive transposon-mediated genomic plasticity and diversity among potential effector proteins within the genus Coxiella.</title>
        <authorList>
            <person name="Beare P.A."/>
            <person name="Unsworth N."/>
            <person name="Andoh M."/>
            <person name="Voth D.E."/>
            <person name="Omsland A."/>
            <person name="Gilk S.D."/>
            <person name="Williams K.P."/>
            <person name="Sobral B.W."/>
            <person name="Kupko J.J. III"/>
            <person name="Porcella S.F."/>
            <person name="Samuel J.E."/>
            <person name="Heinzen R.A."/>
        </authorList>
    </citation>
    <scope>NUCLEOTIDE SEQUENCE [LARGE SCALE GENOMIC DNA]</scope>
    <source>
        <strain>Dugway 5J108-111</strain>
    </source>
</reference>